<keyword id="KW-0007">Acetylation</keyword>
<keyword id="KW-0025">Alternative splicing</keyword>
<keyword id="KW-0217">Developmental protein</keyword>
<keyword id="KW-0221">Differentiation</keyword>
<keyword id="KW-0238">DNA-binding</keyword>
<keyword id="KW-1017">Isopeptide bond</keyword>
<keyword id="KW-0479">Metal-binding</keyword>
<keyword id="KW-0539">Nucleus</keyword>
<keyword id="KW-0597">Phosphoprotein</keyword>
<keyword id="KW-1267">Proteomics identification</keyword>
<keyword id="KW-1185">Reference proteome</keyword>
<keyword id="KW-0677">Repeat</keyword>
<keyword id="KW-0678">Repressor</keyword>
<keyword id="KW-0804">Transcription</keyword>
<keyword id="KW-0805">Transcription regulation</keyword>
<keyword id="KW-0832">Ubl conjugation</keyword>
<keyword id="KW-0862">Zinc</keyword>
<keyword id="KW-0863">Zinc-finger</keyword>
<protein>
    <recommendedName>
        <fullName evidence="8">Zinc finger and BTB domain-containing protein 7B</fullName>
    </recommendedName>
    <alternativeName>
        <fullName>Krueppel-related zinc finger protein cKrox</fullName>
        <shortName>hcKrox</shortName>
    </alternativeName>
    <alternativeName>
        <fullName>T-helper-inducing POZ/Krueppel-like factor</fullName>
    </alternativeName>
    <alternativeName>
        <fullName>Zinc finger and BTB domain-containing protein 15</fullName>
    </alternativeName>
    <alternativeName>
        <fullName>Zinc finger protein 67 homolog</fullName>
        <shortName>Zfp-67</shortName>
    </alternativeName>
    <alternativeName>
        <fullName>Zinc finger protein 857B</fullName>
    </alternativeName>
    <alternativeName>
        <fullName>Zinc finger protein Th-POK</fullName>
    </alternativeName>
</protein>
<sequence length="539" mass="58027">MGSPEDDLIGIPFPDHSSELLSCLNEQRQLGHLCDLTIRTQGLEYRTHRAVLAACSHYFKKLFTEGGGGAVMGAGGSGTATGGAGAGVCELDFVGPEALGALLEFAYTATLTTSSANMPAVLQAARLLEIPCVIAACMEILQGSGLEAPSPDEDDCERARQYLEAFATATASGVPNGEDSPPQVPLPPPPPPPPRPVARRSRKPRKAFLQTKGARANHLVPEVPTVPAHPLTYEEEEVAGRVGSSGGSGPGDSYSPPTGTASPPEGPQSYEPYEGEEEEEELVYPPAYGLAQGGGPPLSPEELGSDEDAIDPDLMAYLSSLHQDNLAPGLDSQDKLVRKRRSQMPQECPVCHKIIHGAGKLPRHMRTHTGEKPFACEVCGVRFTRNDKLKIHMRKHTGERPYSCPHCPARFLHSYDLKNHMHLHTGDRPYECHLCHKAFAKEDHLQRHLKGQNCLEVRTRRRRKDDAPPHYPPPSTAAASPAGLDLSNGHLDTFRLSLARFWEQSAPTGPPVSTPGPPDDDEEEGAPTTPQAEGAMESS</sequence>
<comment type="function">
    <text evidence="1 6">Transcription regulator that acts as a key regulator of lineage commitment of immature T-cell precursors. Exerts distinct biological functions in the mammary epithelial cells and T cells in a tissue-specific manner. Necessary and sufficient for commitment of CD4 lineage, while its absence causes CD8 commitment. Development of immature T-cell precursors (thymocytes) to either the CD4 helper or CD8 killer T-cell lineages correlates precisely with their T-cell receptor specificity for major histocompatibility complex class II or class I molecules, respectively. Cross-antagonism between ZBTB7B and CBF complexes are determinative to CD4 versus CD8 cell fate decision. Suppresses RUNX3 expression and imposes CD4+ lineage fate by inducing the SOCS suppressors of cytokine signaling. induces, as a transcriptional activator, SOCS genes expression which represses RUNX3 expression and promotes the CD4+ lineage fate. During CD4 lineage commitment, associates with multiple sites at the CD8 locus, acting as a negative regulator of the CD8 promoter and enhancers by epigenetic silencing through the recruitment of class II histone deacetylases, such as HDAC4 and HDAC5, to these loci. Regulates the development of IL17-producing CD1d-restricted naural killer (NK) T cells. Also functions as an important metabolic regulator in the lactating mammary glands. Critical feed-forward regulator of insulin signaling in mammary gland lactation, directly regulates expression of insulin receptor substrate-1 (IRS-1) and insulin-induced Akt-mTOR-SREBP signaling (By similarity). Transcriptional repressor of the collagen COL1A1 and COL1A2 genes. May also function as a repressor of fibronectin and possibly other extracellular matrix genes (PubMed:9370309). Potent driver of brown fat development, thermogenesis and cold-induced beige fat formation. Recruits the brown fat lncRNA 1 (Blnc1):HNRNPU ribonucleoprotein complex to activate thermogenic gene expression in brown and beige adipocytes (By similarity).</text>
</comment>
<comment type="subunit">
    <text evidence="1">Homodimerizes. Interacts with NCL, NEDD4 and YBX1. Interacts with HNRNPU (via RNA-binding RGG-box region); the interaction facilitates the recruitment of long non-coding RNA Blnc1 by ZBTB7B. Interacts with HDAC4 and HDAC5; the interaction allows the recruitment of HDAC4 and HDAC5 on CD8 loci for deacetylation and possible inhibition of CD8 genes expression.</text>
</comment>
<comment type="interaction">
    <interactant intactId="EBI-740434">
        <id>O15156</id>
    </interactant>
    <interactant intactId="EBI-765407">
        <id>P41182</id>
        <label>BCL6</label>
    </interactant>
    <organismsDiffer>false</organismsDiffer>
    <experiments>3</experiments>
</comment>
<comment type="interaction">
    <interactant intactId="EBI-740434">
        <id>O15156</id>
    </interactant>
    <interactant intactId="EBI-401755">
        <id>P62993</id>
        <label>GRB2</label>
    </interactant>
    <organismsDiffer>false</organismsDiffer>
    <experiments>3</experiments>
</comment>
<comment type="interaction">
    <interactant intactId="EBI-740434">
        <id>O15156</id>
    </interactant>
    <interactant intactId="EBI-8641721">
        <id>Q96G21</id>
        <label>IMP4</label>
    </interactant>
    <organismsDiffer>false</organismsDiffer>
    <experiments>4</experiments>
</comment>
<comment type="interaction">
    <interactant intactId="EBI-740434">
        <id>O15156</id>
    </interactant>
    <interactant intactId="EBI-399257">
        <id>Q15014</id>
        <label>MORF4L2</label>
    </interactant>
    <organismsDiffer>false</organismsDiffer>
    <experiments>3</experiments>
</comment>
<comment type="interaction">
    <interactant intactId="EBI-740434">
        <id>O15156</id>
    </interactant>
    <interactant intactId="EBI-713635">
        <id>O43639</id>
        <label>NCK2</label>
    </interactant>
    <organismsDiffer>false</organismsDiffer>
    <experiments>3</experiments>
</comment>
<comment type="interaction">
    <interactant intactId="EBI-740434">
        <id>O15156</id>
    </interactant>
    <interactant intactId="EBI-714158">
        <id>Q13526</id>
        <label>PIN1</label>
    </interactant>
    <organismsDiffer>false</organismsDiffer>
    <experiments>3</experiments>
</comment>
<comment type="interaction">
    <interactant intactId="EBI-740434">
        <id>O15156</id>
    </interactant>
    <interactant intactId="EBI-358122">
        <id>P32969</id>
        <label>RPL9P9</label>
    </interactant>
    <organismsDiffer>false</organismsDiffer>
    <experiments>3</experiments>
</comment>
<comment type="interaction">
    <interactant intactId="EBI-740434">
        <id>O15156</id>
    </interactant>
    <interactant intactId="EBI-722667">
        <id>Q96HL8</id>
        <label>SH3YL1</label>
    </interactant>
    <organismsDiffer>false</organismsDiffer>
    <experiments>3</experiments>
</comment>
<comment type="interaction">
    <interactant intactId="EBI-740434">
        <id>O15156</id>
    </interactant>
    <interactant intactId="EBI-741237">
        <id>O60504</id>
        <label>SORBS3</label>
    </interactant>
    <organismsDiffer>false</organismsDiffer>
    <experiments>3</experiments>
</comment>
<comment type="interaction">
    <interactant intactId="EBI-740434">
        <id>O15156</id>
    </interactant>
    <interactant intactId="EBI-747142">
        <id>Q96C24</id>
        <label>SYTL4</label>
    </interactant>
    <organismsDiffer>false</organismsDiffer>
    <experiments>3</experiments>
</comment>
<comment type="interaction">
    <interactant intactId="EBI-740434">
        <id>O15156</id>
    </interactant>
    <interactant intactId="EBI-722671">
        <id>O15062</id>
        <label>ZBTB5</label>
    </interactant>
    <organismsDiffer>false</organismsDiffer>
    <experiments>3</experiments>
</comment>
<comment type="interaction">
    <interactant intactId="EBI-740434">
        <id>O15156</id>
    </interactant>
    <interactant intactId="EBI-10244213">
        <id>Q5JPT6</id>
    </interactant>
    <organismsDiffer>false</organismsDiffer>
    <experiments>3</experiments>
</comment>
<comment type="interaction">
    <interactant intactId="EBI-11522250">
        <id>O15156-2</id>
    </interactant>
    <interactant intactId="EBI-10174813">
        <id>A8KA13</id>
        <label>BCL6B</label>
    </interactant>
    <organismsDiffer>false</organismsDiffer>
    <experiments>3</experiments>
</comment>
<comment type="interaction">
    <interactant intactId="EBI-11522250">
        <id>O15156-2</id>
    </interactant>
    <interactant intactId="EBI-12024864">
        <id>Q96S94-5</id>
        <label>CCNL2</label>
    </interactant>
    <organismsDiffer>false</organismsDiffer>
    <experiments>3</experiments>
</comment>
<comment type="interaction">
    <interactant intactId="EBI-11522250">
        <id>O15156-2</id>
    </interactant>
    <interactant intactId="EBI-6658203">
        <id>Q86YD7</id>
        <label>FAM90A1</label>
    </interactant>
    <organismsDiffer>false</organismsDiffer>
    <experiments>3</experiments>
</comment>
<comment type="interaction">
    <interactant intactId="EBI-11522250">
        <id>O15156-2</id>
    </interactant>
    <interactant intactId="EBI-8641721">
        <id>Q96G21</id>
        <label>IMP4</label>
    </interactant>
    <organismsDiffer>false</organismsDiffer>
    <experiments>3</experiments>
</comment>
<comment type="interaction">
    <interactant intactId="EBI-11522250">
        <id>O15156-2</id>
    </interactant>
    <interactant intactId="EBI-713635">
        <id>O43639</id>
        <label>NCK2</label>
    </interactant>
    <organismsDiffer>false</organismsDiffer>
    <experiments>3</experiments>
</comment>
<comment type="interaction">
    <interactant intactId="EBI-11522250">
        <id>O15156-2</id>
    </interactant>
    <interactant intactId="EBI-10181968">
        <id>Q7Z4N8</id>
        <label>P4HA3</label>
    </interactant>
    <organismsDiffer>false</organismsDiffer>
    <experiments>3</experiments>
</comment>
<comment type="interaction">
    <interactant intactId="EBI-11522250">
        <id>O15156-2</id>
    </interactant>
    <interactant intactId="EBI-346595">
        <id>Q96B97</id>
        <label>SH3KBP1</label>
    </interactant>
    <organismsDiffer>false</organismsDiffer>
    <experiments>3</experiments>
</comment>
<comment type="interaction">
    <interactant intactId="EBI-11522250">
        <id>O15156-2</id>
    </interactant>
    <interactant intactId="EBI-6550597">
        <id>Q15642-2</id>
        <label>TRIP10</label>
    </interactant>
    <organismsDiffer>false</organismsDiffer>
    <experiments>3</experiments>
</comment>
<comment type="interaction">
    <interactant intactId="EBI-11522250">
        <id>O15156-2</id>
    </interactant>
    <interactant intactId="EBI-17208936">
        <id>P0CB47</id>
        <label>UBTFL1</label>
    </interactant>
    <organismsDiffer>false</organismsDiffer>
    <experiments>3</experiments>
</comment>
<comment type="interaction">
    <interactant intactId="EBI-11522250">
        <id>O15156-2</id>
    </interactant>
    <interactant intactId="EBI-12287587">
        <id>B2RXF5</id>
        <label>ZBTB42</label>
    </interactant>
    <organismsDiffer>false</organismsDiffer>
    <experiments>3</experiments>
</comment>
<comment type="interaction">
    <interactant intactId="EBI-11522250">
        <id>O15156-2</id>
    </interactant>
    <interactant intactId="EBI-722671">
        <id>O15062</id>
        <label>ZBTB5</label>
    </interactant>
    <organismsDiffer>false</organismsDiffer>
    <experiments>3</experiments>
</comment>
<comment type="interaction">
    <interactant intactId="EBI-11522250">
        <id>O15156-2</id>
    </interactant>
    <interactant intactId="EBI-17968892">
        <id>A6NJL1</id>
        <label>ZSCAN5B</label>
    </interactant>
    <organismsDiffer>false</organismsDiffer>
    <experiments>3</experiments>
</comment>
<comment type="subcellular location">
    <subcellularLocation>
        <location evidence="1">Nucleus</location>
    </subcellularLocation>
</comment>
<comment type="alternative products">
    <event type="alternative splicing"/>
    <isoform>
        <id>O15156-1</id>
        <name>1</name>
        <sequence type="displayed"/>
    </isoform>
    <isoform>
        <id>O15156-2</id>
        <name>2</name>
        <sequence type="described" ref="VSP_044721"/>
    </isoform>
</comment>
<comment type="PTM">
    <text evidence="1 5">Acetylated directly and specifically by EP300 (PubMed:20810990). EP300-mediated acetylation of Lys-206, Lys-212 and Lys-335 stabilizes the protein by antagonizing ubiquitin conjugation (By similarity).</text>
</comment>
<comment type="PTM">
    <text evidence="1 5">Ubiquitinated, leading to proteasomal degradation (PubMed:20810990). Competes with acetylation on Lys-206, Lys-212 and Lys-335 (By similarity).</text>
</comment>
<accession>O15156</accession>
<accession>B4E3K5</accession>
<accession>D3DV83</accession>
<accession>J3KQQ3</accession>
<accession>Q68DR2</accession>
<accession>Q96EP2</accession>
<proteinExistence type="evidence at protein level"/>
<reference key="1">
    <citation type="journal article" date="1997" name="Gene">
        <title>Cloning and characterization of hcKrox, a transcriptional regulator of extracellular matrix gene expression.</title>
        <authorList>
            <person name="Widom R.L."/>
            <person name="Culic I."/>
            <person name="Lee J.Y."/>
            <person name="Korn J.H."/>
        </authorList>
    </citation>
    <scope>NUCLEOTIDE SEQUENCE [MRNA] (ISOFORM 1)</scope>
    <scope>FUNCTION</scope>
    <source>
        <tissue>Skin fibroblast</tissue>
    </source>
</reference>
<reference key="2">
    <citation type="journal article" date="2004" name="Nat. Genet.">
        <title>Complete sequencing and characterization of 21,243 full-length human cDNAs.</title>
        <authorList>
            <person name="Ota T."/>
            <person name="Suzuki Y."/>
            <person name="Nishikawa T."/>
            <person name="Otsuki T."/>
            <person name="Sugiyama T."/>
            <person name="Irie R."/>
            <person name="Wakamatsu A."/>
            <person name="Hayashi K."/>
            <person name="Sato H."/>
            <person name="Nagai K."/>
            <person name="Kimura K."/>
            <person name="Makita H."/>
            <person name="Sekine M."/>
            <person name="Obayashi M."/>
            <person name="Nishi T."/>
            <person name="Shibahara T."/>
            <person name="Tanaka T."/>
            <person name="Ishii S."/>
            <person name="Yamamoto J."/>
            <person name="Saito K."/>
            <person name="Kawai Y."/>
            <person name="Isono Y."/>
            <person name="Nakamura Y."/>
            <person name="Nagahari K."/>
            <person name="Murakami K."/>
            <person name="Yasuda T."/>
            <person name="Iwayanagi T."/>
            <person name="Wagatsuma M."/>
            <person name="Shiratori A."/>
            <person name="Sudo H."/>
            <person name="Hosoiri T."/>
            <person name="Kaku Y."/>
            <person name="Kodaira H."/>
            <person name="Kondo H."/>
            <person name="Sugawara M."/>
            <person name="Takahashi M."/>
            <person name="Kanda K."/>
            <person name="Yokoi T."/>
            <person name="Furuya T."/>
            <person name="Kikkawa E."/>
            <person name="Omura Y."/>
            <person name="Abe K."/>
            <person name="Kamihara K."/>
            <person name="Katsuta N."/>
            <person name="Sato K."/>
            <person name="Tanikawa M."/>
            <person name="Yamazaki M."/>
            <person name="Ninomiya K."/>
            <person name="Ishibashi T."/>
            <person name="Yamashita H."/>
            <person name="Murakawa K."/>
            <person name="Fujimori K."/>
            <person name="Tanai H."/>
            <person name="Kimata M."/>
            <person name="Watanabe M."/>
            <person name="Hiraoka S."/>
            <person name="Chiba Y."/>
            <person name="Ishida S."/>
            <person name="Ono Y."/>
            <person name="Takiguchi S."/>
            <person name="Watanabe S."/>
            <person name="Yosida M."/>
            <person name="Hotuta T."/>
            <person name="Kusano J."/>
            <person name="Kanehori K."/>
            <person name="Takahashi-Fujii A."/>
            <person name="Hara H."/>
            <person name="Tanase T.-O."/>
            <person name="Nomura Y."/>
            <person name="Togiya S."/>
            <person name="Komai F."/>
            <person name="Hara R."/>
            <person name="Takeuchi K."/>
            <person name="Arita M."/>
            <person name="Imose N."/>
            <person name="Musashino K."/>
            <person name="Yuuki H."/>
            <person name="Oshima A."/>
            <person name="Sasaki N."/>
            <person name="Aotsuka S."/>
            <person name="Yoshikawa Y."/>
            <person name="Matsunawa H."/>
            <person name="Ichihara T."/>
            <person name="Shiohata N."/>
            <person name="Sano S."/>
            <person name="Moriya S."/>
            <person name="Momiyama H."/>
            <person name="Satoh N."/>
            <person name="Takami S."/>
            <person name="Terashima Y."/>
            <person name="Suzuki O."/>
            <person name="Nakagawa S."/>
            <person name="Senoh A."/>
            <person name="Mizoguchi H."/>
            <person name="Goto Y."/>
            <person name="Shimizu F."/>
            <person name="Wakebe H."/>
            <person name="Hishigaki H."/>
            <person name="Watanabe T."/>
            <person name="Sugiyama A."/>
            <person name="Takemoto M."/>
            <person name="Kawakami B."/>
            <person name="Yamazaki M."/>
            <person name="Watanabe K."/>
            <person name="Kumagai A."/>
            <person name="Itakura S."/>
            <person name="Fukuzumi Y."/>
            <person name="Fujimori Y."/>
            <person name="Komiyama M."/>
            <person name="Tashiro H."/>
            <person name="Tanigami A."/>
            <person name="Fujiwara T."/>
            <person name="Ono T."/>
            <person name="Yamada K."/>
            <person name="Fujii Y."/>
            <person name="Ozaki K."/>
            <person name="Hirao M."/>
            <person name="Ohmori Y."/>
            <person name="Kawabata A."/>
            <person name="Hikiji T."/>
            <person name="Kobatake N."/>
            <person name="Inagaki H."/>
            <person name="Ikema Y."/>
            <person name="Okamoto S."/>
            <person name="Okitani R."/>
            <person name="Kawakami T."/>
            <person name="Noguchi S."/>
            <person name="Itoh T."/>
            <person name="Shigeta K."/>
            <person name="Senba T."/>
            <person name="Matsumura K."/>
            <person name="Nakajima Y."/>
            <person name="Mizuno T."/>
            <person name="Morinaga M."/>
            <person name="Sasaki M."/>
            <person name="Togashi T."/>
            <person name="Oyama M."/>
            <person name="Hata H."/>
            <person name="Watanabe M."/>
            <person name="Komatsu T."/>
            <person name="Mizushima-Sugano J."/>
            <person name="Satoh T."/>
            <person name="Shirai Y."/>
            <person name="Takahashi Y."/>
            <person name="Nakagawa K."/>
            <person name="Okumura K."/>
            <person name="Nagase T."/>
            <person name="Nomura N."/>
            <person name="Kikuchi H."/>
            <person name="Masuho Y."/>
            <person name="Yamashita R."/>
            <person name="Nakai K."/>
            <person name="Yada T."/>
            <person name="Nakamura Y."/>
            <person name="Ohara O."/>
            <person name="Isogai T."/>
            <person name="Sugano S."/>
        </authorList>
    </citation>
    <scope>NUCLEOTIDE SEQUENCE [LARGE SCALE MRNA] (ISOFORM 2)</scope>
    <source>
        <tissue>Uterus</tissue>
    </source>
</reference>
<reference key="3">
    <citation type="journal article" date="2007" name="BMC Genomics">
        <title>The full-ORF clone resource of the German cDNA consortium.</title>
        <authorList>
            <person name="Bechtel S."/>
            <person name="Rosenfelder H."/>
            <person name="Duda A."/>
            <person name="Schmidt C.P."/>
            <person name="Ernst U."/>
            <person name="Wellenreuther R."/>
            <person name="Mehrle A."/>
            <person name="Schuster C."/>
            <person name="Bahr A."/>
            <person name="Bloecker H."/>
            <person name="Heubner D."/>
            <person name="Hoerlein A."/>
            <person name="Michel G."/>
            <person name="Wedler H."/>
            <person name="Koehrer K."/>
            <person name="Ottenwaelder B."/>
            <person name="Poustka A."/>
            <person name="Wiemann S."/>
            <person name="Schupp I."/>
        </authorList>
    </citation>
    <scope>NUCLEOTIDE SEQUENCE [LARGE SCALE MRNA] (ISOFORM 1)</scope>
    <source>
        <tissue>Salivary gland</tissue>
    </source>
</reference>
<reference key="4">
    <citation type="journal article" date="2006" name="Nature">
        <title>The DNA sequence and biological annotation of human chromosome 1.</title>
        <authorList>
            <person name="Gregory S.G."/>
            <person name="Barlow K.F."/>
            <person name="McLay K.E."/>
            <person name="Kaul R."/>
            <person name="Swarbreck D."/>
            <person name="Dunham A."/>
            <person name="Scott C.E."/>
            <person name="Howe K.L."/>
            <person name="Woodfine K."/>
            <person name="Spencer C.C.A."/>
            <person name="Jones M.C."/>
            <person name="Gillson C."/>
            <person name="Searle S."/>
            <person name="Zhou Y."/>
            <person name="Kokocinski F."/>
            <person name="McDonald L."/>
            <person name="Evans R."/>
            <person name="Phillips K."/>
            <person name="Atkinson A."/>
            <person name="Cooper R."/>
            <person name="Jones C."/>
            <person name="Hall R.E."/>
            <person name="Andrews T.D."/>
            <person name="Lloyd C."/>
            <person name="Ainscough R."/>
            <person name="Almeida J.P."/>
            <person name="Ambrose K.D."/>
            <person name="Anderson F."/>
            <person name="Andrew R.W."/>
            <person name="Ashwell R.I.S."/>
            <person name="Aubin K."/>
            <person name="Babbage A.K."/>
            <person name="Bagguley C.L."/>
            <person name="Bailey J."/>
            <person name="Beasley H."/>
            <person name="Bethel G."/>
            <person name="Bird C.P."/>
            <person name="Bray-Allen S."/>
            <person name="Brown J.Y."/>
            <person name="Brown A.J."/>
            <person name="Buckley D."/>
            <person name="Burton J."/>
            <person name="Bye J."/>
            <person name="Carder C."/>
            <person name="Chapman J.C."/>
            <person name="Clark S.Y."/>
            <person name="Clarke G."/>
            <person name="Clee C."/>
            <person name="Cobley V."/>
            <person name="Collier R.E."/>
            <person name="Corby N."/>
            <person name="Coville G.J."/>
            <person name="Davies J."/>
            <person name="Deadman R."/>
            <person name="Dunn M."/>
            <person name="Earthrowl M."/>
            <person name="Ellington A.G."/>
            <person name="Errington H."/>
            <person name="Frankish A."/>
            <person name="Frankland J."/>
            <person name="French L."/>
            <person name="Garner P."/>
            <person name="Garnett J."/>
            <person name="Gay L."/>
            <person name="Ghori M.R.J."/>
            <person name="Gibson R."/>
            <person name="Gilby L.M."/>
            <person name="Gillett W."/>
            <person name="Glithero R.J."/>
            <person name="Grafham D.V."/>
            <person name="Griffiths C."/>
            <person name="Griffiths-Jones S."/>
            <person name="Grocock R."/>
            <person name="Hammond S."/>
            <person name="Harrison E.S.I."/>
            <person name="Hart E."/>
            <person name="Haugen E."/>
            <person name="Heath P.D."/>
            <person name="Holmes S."/>
            <person name="Holt K."/>
            <person name="Howden P.J."/>
            <person name="Hunt A.R."/>
            <person name="Hunt S.E."/>
            <person name="Hunter G."/>
            <person name="Isherwood J."/>
            <person name="James R."/>
            <person name="Johnson C."/>
            <person name="Johnson D."/>
            <person name="Joy A."/>
            <person name="Kay M."/>
            <person name="Kershaw J.K."/>
            <person name="Kibukawa M."/>
            <person name="Kimberley A.M."/>
            <person name="King A."/>
            <person name="Knights A.J."/>
            <person name="Lad H."/>
            <person name="Laird G."/>
            <person name="Lawlor S."/>
            <person name="Leongamornlert D.A."/>
            <person name="Lloyd D.M."/>
            <person name="Loveland J."/>
            <person name="Lovell J."/>
            <person name="Lush M.J."/>
            <person name="Lyne R."/>
            <person name="Martin S."/>
            <person name="Mashreghi-Mohammadi M."/>
            <person name="Matthews L."/>
            <person name="Matthews N.S.W."/>
            <person name="McLaren S."/>
            <person name="Milne S."/>
            <person name="Mistry S."/>
            <person name="Moore M.J.F."/>
            <person name="Nickerson T."/>
            <person name="O'Dell C.N."/>
            <person name="Oliver K."/>
            <person name="Palmeiri A."/>
            <person name="Palmer S.A."/>
            <person name="Parker A."/>
            <person name="Patel D."/>
            <person name="Pearce A.V."/>
            <person name="Peck A.I."/>
            <person name="Pelan S."/>
            <person name="Phelps K."/>
            <person name="Phillimore B.J."/>
            <person name="Plumb R."/>
            <person name="Rajan J."/>
            <person name="Raymond C."/>
            <person name="Rouse G."/>
            <person name="Saenphimmachak C."/>
            <person name="Sehra H.K."/>
            <person name="Sheridan E."/>
            <person name="Shownkeen R."/>
            <person name="Sims S."/>
            <person name="Skuce C.D."/>
            <person name="Smith M."/>
            <person name="Steward C."/>
            <person name="Subramanian S."/>
            <person name="Sycamore N."/>
            <person name="Tracey A."/>
            <person name="Tromans A."/>
            <person name="Van Helmond Z."/>
            <person name="Wall M."/>
            <person name="Wallis J.M."/>
            <person name="White S."/>
            <person name="Whitehead S.L."/>
            <person name="Wilkinson J.E."/>
            <person name="Willey D.L."/>
            <person name="Williams H."/>
            <person name="Wilming L."/>
            <person name="Wray P.W."/>
            <person name="Wu Z."/>
            <person name="Coulson A."/>
            <person name="Vaudin M."/>
            <person name="Sulston J.E."/>
            <person name="Durbin R.M."/>
            <person name="Hubbard T."/>
            <person name="Wooster R."/>
            <person name="Dunham I."/>
            <person name="Carter N.P."/>
            <person name="McVean G."/>
            <person name="Ross M.T."/>
            <person name="Harrow J."/>
            <person name="Olson M.V."/>
            <person name="Beck S."/>
            <person name="Rogers J."/>
            <person name="Bentley D.R."/>
        </authorList>
    </citation>
    <scope>NUCLEOTIDE SEQUENCE [LARGE SCALE GENOMIC DNA]</scope>
</reference>
<reference key="5">
    <citation type="submission" date="2005-09" db="EMBL/GenBank/DDBJ databases">
        <authorList>
            <person name="Mural R.J."/>
            <person name="Istrail S."/>
            <person name="Sutton G.G."/>
            <person name="Florea L."/>
            <person name="Halpern A.L."/>
            <person name="Mobarry C.M."/>
            <person name="Lippert R."/>
            <person name="Walenz B."/>
            <person name="Shatkay H."/>
            <person name="Dew I."/>
            <person name="Miller J.R."/>
            <person name="Flanigan M.J."/>
            <person name="Edwards N.J."/>
            <person name="Bolanos R."/>
            <person name="Fasulo D."/>
            <person name="Halldorsson B.V."/>
            <person name="Hannenhalli S."/>
            <person name="Turner R."/>
            <person name="Yooseph S."/>
            <person name="Lu F."/>
            <person name="Nusskern D.R."/>
            <person name="Shue B.C."/>
            <person name="Zheng X.H."/>
            <person name="Zhong F."/>
            <person name="Delcher A.L."/>
            <person name="Huson D.H."/>
            <person name="Kravitz S.A."/>
            <person name="Mouchard L."/>
            <person name="Reinert K."/>
            <person name="Remington K.A."/>
            <person name="Clark A.G."/>
            <person name="Waterman M.S."/>
            <person name="Eichler E.E."/>
            <person name="Adams M.D."/>
            <person name="Hunkapiller M.W."/>
            <person name="Myers E.W."/>
            <person name="Venter J.C."/>
        </authorList>
    </citation>
    <scope>NUCLEOTIDE SEQUENCE [LARGE SCALE GENOMIC DNA]</scope>
</reference>
<reference key="6">
    <citation type="journal article" date="2004" name="Genome Res.">
        <title>The status, quality, and expansion of the NIH full-length cDNA project: the Mammalian Gene Collection (MGC).</title>
        <authorList>
            <consortium name="The MGC Project Team"/>
        </authorList>
    </citation>
    <scope>NUCLEOTIDE SEQUENCE [LARGE SCALE MRNA] (ISOFORM 1)</scope>
    <source>
        <tissue>Uterus</tissue>
    </source>
</reference>
<reference key="7">
    <citation type="journal article" date="2008" name="Proc. Natl. Acad. Sci. U.S.A.">
        <title>A quantitative atlas of mitotic phosphorylation.</title>
        <authorList>
            <person name="Dephoure N."/>
            <person name="Zhou C."/>
            <person name="Villen J."/>
            <person name="Beausoleil S.A."/>
            <person name="Bakalarski C.E."/>
            <person name="Elledge S.J."/>
            <person name="Gygi S.P."/>
        </authorList>
    </citation>
    <scope>PHOSPHORYLATION [LARGE SCALE ANALYSIS] AT THR-369</scope>
    <scope>IDENTIFICATION BY MASS SPECTROMETRY [LARGE SCALE ANALYSIS]</scope>
    <source>
        <tissue>Cervix carcinoma</tissue>
    </source>
</reference>
<reference key="8">
    <citation type="journal article" date="2010" name="J. Immunol.">
        <title>p300-mediated acetylation stabilizes the Th-inducing POK factor.</title>
        <authorList>
            <person name="Zhang M."/>
            <person name="Zhang J."/>
            <person name="Rui J."/>
            <person name="Liu X."/>
        </authorList>
    </citation>
    <scope>ACETYLATION BY EP300</scope>
    <scope>UBIQUITINATION</scope>
</reference>
<reference key="9">
    <citation type="journal article" date="2010" name="Sci. Signal.">
        <title>Quantitative phosphoproteomics reveals widespread full phosphorylation site occupancy during mitosis.</title>
        <authorList>
            <person name="Olsen J.V."/>
            <person name="Vermeulen M."/>
            <person name="Santamaria A."/>
            <person name="Kumar C."/>
            <person name="Miller M.L."/>
            <person name="Jensen L.J."/>
            <person name="Gnad F."/>
            <person name="Cox J."/>
            <person name="Jensen T.S."/>
            <person name="Nigg E.A."/>
            <person name="Brunak S."/>
            <person name="Mann M."/>
        </authorList>
    </citation>
    <scope>IDENTIFICATION BY MASS SPECTROMETRY [LARGE SCALE ANALYSIS]</scope>
    <source>
        <tissue>Cervix carcinoma</tissue>
    </source>
</reference>
<reference key="10">
    <citation type="journal article" date="2014" name="J. Proteomics">
        <title>An enzyme assisted RP-RPLC approach for in-depth analysis of human liver phosphoproteome.</title>
        <authorList>
            <person name="Bian Y."/>
            <person name="Song C."/>
            <person name="Cheng K."/>
            <person name="Dong M."/>
            <person name="Wang F."/>
            <person name="Huang J."/>
            <person name="Sun D."/>
            <person name="Wang L."/>
            <person name="Ye M."/>
            <person name="Zou H."/>
        </authorList>
    </citation>
    <scope>PHOSPHORYLATION [LARGE SCALE ANALYSIS] AT SER-150</scope>
    <scope>IDENTIFICATION BY MASS SPECTROMETRY [LARGE SCALE ANALYSIS]</scope>
    <source>
        <tissue>Liver</tissue>
    </source>
</reference>
<organism>
    <name type="scientific">Homo sapiens</name>
    <name type="common">Human</name>
    <dbReference type="NCBI Taxonomy" id="9606"/>
    <lineage>
        <taxon>Eukaryota</taxon>
        <taxon>Metazoa</taxon>
        <taxon>Chordata</taxon>
        <taxon>Craniata</taxon>
        <taxon>Vertebrata</taxon>
        <taxon>Euteleostomi</taxon>
        <taxon>Mammalia</taxon>
        <taxon>Eutheria</taxon>
        <taxon>Euarchontoglires</taxon>
        <taxon>Primates</taxon>
        <taxon>Haplorrhini</taxon>
        <taxon>Catarrhini</taxon>
        <taxon>Hominidae</taxon>
        <taxon>Homo</taxon>
    </lineage>
</organism>
<feature type="chain" id="PRO_0000047719" description="Zinc finger and BTB domain-containing protein 7B">
    <location>
        <begin position="1"/>
        <end position="539"/>
    </location>
</feature>
<feature type="domain" description="BTB" evidence="2">
    <location>
        <begin position="34"/>
        <end position="115"/>
    </location>
</feature>
<feature type="zinc finger region" description="C2H2-type 1" evidence="3">
    <location>
        <begin position="346"/>
        <end position="368"/>
    </location>
</feature>
<feature type="zinc finger region" description="C2H2-type 2" evidence="3">
    <location>
        <begin position="374"/>
        <end position="396"/>
    </location>
</feature>
<feature type="zinc finger region" description="C2H2-type 3" evidence="3">
    <location>
        <begin position="402"/>
        <end position="424"/>
    </location>
</feature>
<feature type="zinc finger region" description="C2H2-type 4; atypical" evidence="3">
    <location>
        <begin position="430"/>
        <end position="454"/>
    </location>
</feature>
<feature type="region of interest" description="Disordered" evidence="4">
    <location>
        <begin position="171"/>
        <end position="308"/>
    </location>
</feature>
<feature type="region of interest" description="Required for interaction with and acetylation by EP300" evidence="1">
    <location>
        <begin position="344"/>
        <end position="400"/>
    </location>
</feature>
<feature type="region of interest" description="Disordered" evidence="4">
    <location>
        <begin position="458"/>
        <end position="486"/>
    </location>
</feature>
<feature type="region of interest" description="Disordered" evidence="4">
    <location>
        <begin position="501"/>
        <end position="539"/>
    </location>
</feature>
<feature type="compositionally biased region" description="Pro residues" evidence="4">
    <location>
        <begin position="182"/>
        <end position="196"/>
    </location>
</feature>
<feature type="compositionally biased region" description="Basic residues" evidence="4">
    <location>
        <begin position="197"/>
        <end position="206"/>
    </location>
</feature>
<feature type="compositionally biased region" description="Acidic residues" evidence="4">
    <location>
        <begin position="273"/>
        <end position="282"/>
    </location>
</feature>
<feature type="compositionally biased region" description="Pro residues" evidence="4">
    <location>
        <begin position="508"/>
        <end position="517"/>
    </location>
</feature>
<feature type="modified residue" description="Phosphoserine" evidence="11">
    <location>
        <position position="150"/>
    </location>
</feature>
<feature type="modified residue" description="N6-acetyllysine; by EP300; alternate" evidence="1">
    <location>
        <position position="206"/>
    </location>
</feature>
<feature type="modified residue" description="N6-acetyllysine; by EP300; alternate" evidence="1">
    <location>
        <position position="212"/>
    </location>
</feature>
<feature type="modified residue" description="N6-acetyllysine; by EP300; alternate" evidence="1">
    <location>
        <position position="335"/>
    </location>
</feature>
<feature type="modified residue" description="Phosphothreonine" evidence="10">
    <location>
        <position position="369"/>
    </location>
</feature>
<feature type="cross-link" description="Glycyl lysine isopeptide (Lys-Gly) (interchain with G-Cter in ubiquitin); alternate" evidence="1">
    <location>
        <position position="206"/>
    </location>
</feature>
<feature type="cross-link" description="Glycyl lysine isopeptide (Lys-Gly) (interchain with G-Cter in ubiquitin); alternate" evidence="1">
    <location>
        <position position="212"/>
    </location>
</feature>
<feature type="cross-link" description="Glycyl lysine isopeptide (Lys-Gly) (interchain with G-Cter in ubiquitin); alternate" evidence="1">
    <location>
        <position position="335"/>
    </location>
</feature>
<feature type="splice variant" id="VSP_044721" description="In isoform 2." evidence="7">
    <original>M</original>
    <variation>MLQPGPHPPSPQAAAPGEAWPGPSQAPWQSLEEKM</variation>
    <location>
        <position position="1"/>
    </location>
</feature>
<feature type="sequence conflict" description="In Ref. 2; BAG65517." evidence="8" ref="2">
    <original>E</original>
    <variation>K</variation>
    <location>
        <position position="90"/>
    </location>
</feature>
<feature type="sequence conflict" description="In Ref. 2; BAG65517." evidence="8" ref="2">
    <original>E</original>
    <variation>G</variation>
    <location>
        <position position="235"/>
    </location>
</feature>
<feature type="sequence conflict" description="In Ref. 1; AAC51847." evidence="8" ref="1">
    <original>K</original>
    <variation>R</variation>
    <location>
        <position position="437"/>
    </location>
</feature>
<feature type="sequence conflict" description="In Ref. 1; AAC51847." evidence="8" ref="1">
    <original>S</original>
    <variation>F</variation>
    <location>
        <position position="480"/>
    </location>
</feature>
<feature type="sequence conflict" description="In Ref. 1; AAC51847." evidence="8" ref="1">
    <original>GP</original>
    <variation>WA</variation>
    <location>
        <begin position="509"/>
        <end position="510"/>
    </location>
</feature>
<evidence type="ECO:0000250" key="1">
    <source>
        <dbReference type="UniProtKB" id="Q64321"/>
    </source>
</evidence>
<evidence type="ECO:0000255" key="2">
    <source>
        <dbReference type="PROSITE-ProRule" id="PRU00037"/>
    </source>
</evidence>
<evidence type="ECO:0000255" key="3">
    <source>
        <dbReference type="PROSITE-ProRule" id="PRU00042"/>
    </source>
</evidence>
<evidence type="ECO:0000256" key="4">
    <source>
        <dbReference type="SAM" id="MobiDB-lite"/>
    </source>
</evidence>
<evidence type="ECO:0000269" key="5">
    <source>
    </source>
</evidence>
<evidence type="ECO:0000269" key="6">
    <source>
    </source>
</evidence>
<evidence type="ECO:0000303" key="7">
    <source>
    </source>
</evidence>
<evidence type="ECO:0000305" key="8"/>
<evidence type="ECO:0000312" key="9">
    <source>
        <dbReference type="HGNC" id="HGNC:18668"/>
    </source>
</evidence>
<evidence type="ECO:0007744" key="10">
    <source>
    </source>
</evidence>
<evidence type="ECO:0007744" key="11">
    <source>
    </source>
</evidence>
<name>ZBT7B_HUMAN</name>
<dbReference type="EMBL" id="AF007833">
    <property type="protein sequence ID" value="AAC51847.1"/>
    <property type="molecule type" value="mRNA"/>
</dbReference>
<dbReference type="EMBL" id="AK304762">
    <property type="protein sequence ID" value="BAG65517.1"/>
    <property type="molecule type" value="mRNA"/>
</dbReference>
<dbReference type="EMBL" id="CR749303">
    <property type="protein sequence ID" value="CAH18158.1"/>
    <property type="molecule type" value="mRNA"/>
</dbReference>
<dbReference type="EMBL" id="AL451085">
    <property type="status" value="NOT_ANNOTATED_CDS"/>
    <property type="molecule type" value="Genomic_DNA"/>
</dbReference>
<dbReference type="EMBL" id="CH471121">
    <property type="protein sequence ID" value="EAW53149.1"/>
    <property type="molecule type" value="Genomic_DNA"/>
</dbReference>
<dbReference type="EMBL" id="CH471121">
    <property type="protein sequence ID" value="EAW53150.1"/>
    <property type="molecule type" value="Genomic_DNA"/>
</dbReference>
<dbReference type="EMBL" id="CH471121">
    <property type="protein sequence ID" value="EAW53151.1"/>
    <property type="molecule type" value="Genomic_DNA"/>
</dbReference>
<dbReference type="EMBL" id="BC012070">
    <property type="protein sequence ID" value="AAH12070.1"/>
    <property type="molecule type" value="mRNA"/>
</dbReference>
<dbReference type="CCDS" id="CCDS1081.1">
    <molecule id="O15156-1"/>
</dbReference>
<dbReference type="CCDS" id="CCDS58030.1">
    <molecule id="O15156-2"/>
</dbReference>
<dbReference type="RefSeq" id="NP_001239335.1">
    <molecule id="O15156-2"/>
    <property type="nucleotide sequence ID" value="NM_001252406.3"/>
</dbReference>
<dbReference type="RefSeq" id="NP_001243384.1">
    <molecule id="O15156-1"/>
    <property type="nucleotide sequence ID" value="NM_001256455.2"/>
</dbReference>
<dbReference type="RefSeq" id="NP_001364380.1">
    <molecule id="O15156-2"/>
    <property type="nucleotide sequence ID" value="NM_001377451.1"/>
</dbReference>
<dbReference type="RefSeq" id="NP_001364381.1">
    <molecule id="O15156-1"/>
    <property type="nucleotide sequence ID" value="NM_001377452.1"/>
</dbReference>
<dbReference type="RefSeq" id="NP_001364382.1">
    <molecule id="O15156-1"/>
    <property type="nucleotide sequence ID" value="NM_001377453.1"/>
</dbReference>
<dbReference type="RefSeq" id="NP_001364383.1">
    <molecule id="O15156-1"/>
    <property type="nucleotide sequence ID" value="NM_001377454.1"/>
</dbReference>
<dbReference type="RefSeq" id="NP_001364384.1">
    <molecule id="O15156-1"/>
    <property type="nucleotide sequence ID" value="NM_001377455.1"/>
</dbReference>
<dbReference type="RefSeq" id="XP_006711412.2">
    <property type="nucleotide sequence ID" value="XM_006711349.2"/>
</dbReference>
<dbReference type="RefSeq" id="XP_006711416.1">
    <property type="nucleotide sequence ID" value="XM_006711353.1"/>
</dbReference>
<dbReference type="RefSeq" id="XP_006711417.1">
    <property type="nucleotide sequence ID" value="XM_006711354.1"/>
</dbReference>
<dbReference type="RefSeq" id="XP_006711419.1">
    <molecule id="O15156-1"/>
    <property type="nucleotide sequence ID" value="XM_006711356.4"/>
</dbReference>
<dbReference type="RefSeq" id="XP_006711420.1">
    <property type="nucleotide sequence ID" value="XM_006711357.1"/>
</dbReference>
<dbReference type="RefSeq" id="XP_006711421.1">
    <property type="nucleotide sequence ID" value="XM_006711358.1"/>
</dbReference>
<dbReference type="RefSeq" id="XP_006711422.1">
    <molecule id="O15156-1"/>
    <property type="nucleotide sequence ID" value="XM_006711359.3"/>
</dbReference>
<dbReference type="RefSeq" id="XP_011507900.1">
    <property type="nucleotide sequence ID" value="XM_011509598.2"/>
</dbReference>
<dbReference type="RefSeq" id="XP_011507901.1">
    <molecule id="O15156-1"/>
    <property type="nucleotide sequence ID" value="XM_011509599.3"/>
</dbReference>
<dbReference type="RefSeq" id="XP_047277809.1">
    <molecule id="O15156-2"/>
    <property type="nucleotide sequence ID" value="XM_047421853.1"/>
</dbReference>
<dbReference type="RefSeq" id="XP_047277810.1">
    <molecule id="O15156-2"/>
    <property type="nucleotide sequence ID" value="XM_047421854.1"/>
</dbReference>
<dbReference type="RefSeq" id="XP_047277814.1">
    <molecule id="O15156-2"/>
    <property type="nucleotide sequence ID" value="XM_047421858.1"/>
</dbReference>
<dbReference type="RefSeq" id="XP_047277819.1">
    <molecule id="O15156-1"/>
    <property type="nucleotide sequence ID" value="XM_047421863.1"/>
</dbReference>
<dbReference type="RefSeq" id="XP_047277821.1">
    <molecule id="O15156-1"/>
    <property type="nucleotide sequence ID" value="XM_047421865.1"/>
</dbReference>
<dbReference type="RefSeq" id="XP_047277824.1">
    <molecule id="O15156-1"/>
    <property type="nucleotide sequence ID" value="XM_047421868.1"/>
</dbReference>
<dbReference type="RefSeq" id="XP_047277827.1">
    <molecule id="O15156-1"/>
    <property type="nucleotide sequence ID" value="XM_047421871.1"/>
</dbReference>
<dbReference type="RefSeq" id="XP_047277832.1">
    <molecule id="O15156-1"/>
    <property type="nucleotide sequence ID" value="XM_047421876.1"/>
</dbReference>
<dbReference type="RefSeq" id="XP_047277839.1">
    <molecule id="O15156-1"/>
    <property type="nucleotide sequence ID" value="XM_047421883.1"/>
</dbReference>
<dbReference type="RefSeq" id="XP_047277850.1">
    <molecule id="O15156-1"/>
    <property type="nucleotide sequence ID" value="XM_047421894.1"/>
</dbReference>
<dbReference type="RefSeq" id="XP_054192830.1">
    <molecule id="O15156-1"/>
    <property type="nucleotide sequence ID" value="XM_054336855.1"/>
</dbReference>
<dbReference type="RefSeq" id="XP_054192831.1">
    <molecule id="O15156-2"/>
    <property type="nucleotide sequence ID" value="XM_054336856.1"/>
</dbReference>
<dbReference type="RefSeq" id="XP_054192832.1">
    <molecule id="O15156-1"/>
    <property type="nucleotide sequence ID" value="XM_054336857.1"/>
</dbReference>
<dbReference type="RefSeq" id="XP_054192833.1">
    <molecule id="O15156-1"/>
    <property type="nucleotide sequence ID" value="XM_054336858.1"/>
</dbReference>
<dbReference type="RefSeq" id="XP_054192834.1">
    <molecule id="O15156-1"/>
    <property type="nucleotide sequence ID" value="XM_054336859.1"/>
</dbReference>
<dbReference type="RefSeq" id="XP_054192835.1">
    <molecule id="O15156-1"/>
    <property type="nucleotide sequence ID" value="XM_054336860.1"/>
</dbReference>
<dbReference type="RefSeq" id="XP_054192836.1">
    <molecule id="O15156-1"/>
    <property type="nucleotide sequence ID" value="XM_054336861.1"/>
</dbReference>
<dbReference type="RefSeq" id="XP_054192837.1">
    <molecule id="O15156-1"/>
    <property type="nucleotide sequence ID" value="XM_054336862.1"/>
</dbReference>
<dbReference type="RefSeq" id="XP_054192838.1">
    <molecule id="O15156-1"/>
    <property type="nucleotide sequence ID" value="XM_054336863.1"/>
</dbReference>
<dbReference type="SMR" id="O15156"/>
<dbReference type="BioGRID" id="119242">
    <property type="interactions" value="67"/>
</dbReference>
<dbReference type="FunCoup" id="O15156">
    <property type="interactions" value="641"/>
</dbReference>
<dbReference type="IntAct" id="O15156">
    <property type="interactions" value="29"/>
</dbReference>
<dbReference type="MINT" id="O15156"/>
<dbReference type="STRING" id="9606.ENSP00000406286"/>
<dbReference type="GlyGen" id="O15156">
    <property type="glycosylation" value="1 site"/>
</dbReference>
<dbReference type="iPTMnet" id="O15156"/>
<dbReference type="PhosphoSitePlus" id="O15156"/>
<dbReference type="SwissPalm" id="O15156"/>
<dbReference type="BioMuta" id="ZBTB7B"/>
<dbReference type="jPOST" id="O15156"/>
<dbReference type="MassIVE" id="O15156"/>
<dbReference type="PaxDb" id="9606-ENSP00000406286"/>
<dbReference type="PeptideAtlas" id="O15156"/>
<dbReference type="ProteomicsDB" id="48480">
    <molecule id="O15156-1"/>
</dbReference>
<dbReference type="Pumba" id="O15156"/>
<dbReference type="ABCD" id="O15156">
    <property type="antibodies" value="4 sequenced antibodies"/>
</dbReference>
<dbReference type="Antibodypedia" id="20407">
    <property type="antibodies" value="306 antibodies from 39 providers"/>
</dbReference>
<dbReference type="DNASU" id="51043"/>
<dbReference type="Ensembl" id="ENST00000292176.2">
    <molecule id="O15156-1"/>
    <property type="protein sequence ID" value="ENSP00000292176.2"/>
    <property type="gene ID" value="ENSG00000160685.14"/>
</dbReference>
<dbReference type="Ensembl" id="ENST00000368426.3">
    <molecule id="O15156-1"/>
    <property type="protein sequence ID" value="ENSP00000357411.3"/>
    <property type="gene ID" value="ENSG00000160685.14"/>
</dbReference>
<dbReference type="Ensembl" id="ENST00000417934.6">
    <molecule id="O15156-2"/>
    <property type="protein sequence ID" value="ENSP00000406286.2"/>
    <property type="gene ID" value="ENSG00000160685.14"/>
</dbReference>
<dbReference type="Ensembl" id="ENST00000535420.6">
    <molecule id="O15156-1"/>
    <property type="protein sequence ID" value="ENSP00000438647.1"/>
    <property type="gene ID" value="ENSG00000160685.14"/>
</dbReference>
<dbReference type="GeneID" id="51043"/>
<dbReference type="KEGG" id="hsa:51043"/>
<dbReference type="MANE-Select" id="ENST00000535420.6">
    <property type="protein sequence ID" value="ENSP00000438647.1"/>
    <property type="RefSeq nucleotide sequence ID" value="NM_001256455.2"/>
    <property type="RefSeq protein sequence ID" value="NP_001243384.1"/>
</dbReference>
<dbReference type="UCSC" id="uc001fgk.5">
    <molecule id="O15156-1"/>
    <property type="organism name" value="human"/>
</dbReference>
<dbReference type="AGR" id="HGNC:18668"/>
<dbReference type="CTD" id="51043"/>
<dbReference type="DisGeNET" id="51043"/>
<dbReference type="GeneCards" id="ZBTB7B"/>
<dbReference type="HGNC" id="HGNC:18668">
    <property type="gene designation" value="ZBTB7B"/>
</dbReference>
<dbReference type="HPA" id="ENSG00000160685">
    <property type="expression patterns" value="Low tissue specificity"/>
</dbReference>
<dbReference type="MIM" id="607646">
    <property type="type" value="gene"/>
</dbReference>
<dbReference type="neXtProt" id="NX_O15156"/>
<dbReference type="OpenTargets" id="ENSG00000160685"/>
<dbReference type="PharmGKB" id="PA38630"/>
<dbReference type="VEuPathDB" id="HostDB:ENSG00000160685"/>
<dbReference type="eggNOG" id="KOG1721">
    <property type="taxonomic scope" value="Eukaryota"/>
</dbReference>
<dbReference type="GeneTree" id="ENSGT00940000160219"/>
<dbReference type="HOGENOM" id="CLU_025627_0_0_1"/>
<dbReference type="InParanoid" id="O15156"/>
<dbReference type="OrthoDB" id="10004641at2759"/>
<dbReference type="PAN-GO" id="O15156">
    <property type="GO annotations" value="4 GO annotations based on evolutionary models"/>
</dbReference>
<dbReference type="PhylomeDB" id="O15156"/>
<dbReference type="TreeFam" id="TF331824"/>
<dbReference type="PathwayCommons" id="O15156"/>
<dbReference type="SignaLink" id="O15156"/>
<dbReference type="BioGRID-ORCS" id="51043">
    <property type="hits" value="50 hits in 1229 CRISPR screens"/>
</dbReference>
<dbReference type="ChiTaRS" id="ZBTB7B">
    <property type="organism name" value="human"/>
</dbReference>
<dbReference type="GeneWiki" id="ZBTB7B"/>
<dbReference type="GenomeRNAi" id="51043"/>
<dbReference type="Pharos" id="O15156">
    <property type="development level" value="Tbio"/>
</dbReference>
<dbReference type="PRO" id="PR:O15156"/>
<dbReference type="Proteomes" id="UP000005640">
    <property type="component" value="Chromosome 1"/>
</dbReference>
<dbReference type="RNAct" id="O15156">
    <property type="molecule type" value="protein"/>
</dbReference>
<dbReference type="Bgee" id="ENSG00000160685">
    <property type="expression patterns" value="Expressed in lower esophagus mucosa and 156 other cell types or tissues"/>
</dbReference>
<dbReference type="GO" id="GO:0005654">
    <property type="term" value="C:nucleoplasm"/>
    <property type="evidence" value="ECO:0000314"/>
    <property type="project" value="HPA"/>
</dbReference>
<dbReference type="GO" id="GO:0001228">
    <property type="term" value="F:DNA-binding transcription activator activity, RNA polymerase II-specific"/>
    <property type="evidence" value="ECO:0007669"/>
    <property type="project" value="Ensembl"/>
</dbReference>
<dbReference type="GO" id="GO:0000981">
    <property type="term" value="F:DNA-binding transcription factor activity, RNA polymerase II-specific"/>
    <property type="evidence" value="ECO:0000318"/>
    <property type="project" value="GO_Central"/>
</dbReference>
<dbReference type="GO" id="GO:0001217">
    <property type="term" value="F:DNA-binding transcription repressor activity"/>
    <property type="evidence" value="ECO:0000250"/>
    <property type="project" value="UniProtKB"/>
</dbReference>
<dbReference type="GO" id="GO:0042826">
    <property type="term" value="F:histone deacetylase binding"/>
    <property type="evidence" value="ECO:0007669"/>
    <property type="project" value="Ensembl"/>
</dbReference>
<dbReference type="GO" id="GO:0042803">
    <property type="term" value="F:protein homodimerization activity"/>
    <property type="evidence" value="ECO:0000250"/>
    <property type="project" value="UniProtKB"/>
</dbReference>
<dbReference type="GO" id="GO:0000978">
    <property type="term" value="F:RNA polymerase II cis-regulatory region sequence-specific DNA binding"/>
    <property type="evidence" value="ECO:0000318"/>
    <property type="project" value="GO_Central"/>
</dbReference>
<dbReference type="GO" id="GO:1990837">
    <property type="term" value="F:sequence-specific double-stranded DNA binding"/>
    <property type="evidence" value="ECO:0000314"/>
    <property type="project" value="ARUK-UCL"/>
</dbReference>
<dbReference type="GO" id="GO:0008270">
    <property type="term" value="F:zinc ion binding"/>
    <property type="evidence" value="ECO:0007669"/>
    <property type="project" value="UniProtKB-KW"/>
</dbReference>
<dbReference type="GO" id="GO:1990845">
    <property type="term" value="P:adaptive thermogenesis"/>
    <property type="evidence" value="ECO:0000250"/>
    <property type="project" value="UniProtKB"/>
</dbReference>
<dbReference type="GO" id="GO:0007398">
    <property type="term" value="P:ectoderm development"/>
    <property type="evidence" value="ECO:0000304"/>
    <property type="project" value="ProtInc"/>
</dbReference>
<dbReference type="GO" id="GO:0007595">
    <property type="term" value="P:lactation"/>
    <property type="evidence" value="ECO:0000250"/>
    <property type="project" value="UniProtKB"/>
</dbReference>
<dbReference type="GO" id="GO:0043377">
    <property type="term" value="P:negative regulation of CD8-positive, alpha-beta T cell differentiation"/>
    <property type="evidence" value="ECO:0000250"/>
    <property type="project" value="UniProtKB"/>
</dbReference>
<dbReference type="GO" id="GO:0010629">
    <property type="term" value="P:negative regulation of gene expression"/>
    <property type="evidence" value="ECO:0007669"/>
    <property type="project" value="Ensembl"/>
</dbReference>
<dbReference type="GO" id="GO:0051141">
    <property type="term" value="P:negative regulation of NK T cell proliferation"/>
    <property type="evidence" value="ECO:0000250"/>
    <property type="project" value="UniProtKB"/>
</dbReference>
<dbReference type="GO" id="GO:2000320">
    <property type="term" value="P:negative regulation of T-helper 17 cell differentiation"/>
    <property type="evidence" value="ECO:0007669"/>
    <property type="project" value="Ensembl"/>
</dbReference>
<dbReference type="GO" id="GO:0000122">
    <property type="term" value="P:negative regulation of transcription by RNA polymerase II"/>
    <property type="evidence" value="ECO:0007669"/>
    <property type="project" value="Ensembl"/>
</dbReference>
<dbReference type="GO" id="GO:0001865">
    <property type="term" value="P:NK T cell differentiation"/>
    <property type="evidence" value="ECO:0000250"/>
    <property type="project" value="UniProtKB"/>
</dbReference>
<dbReference type="GO" id="GO:0090336">
    <property type="term" value="P:positive regulation of brown fat cell differentiation"/>
    <property type="evidence" value="ECO:0000250"/>
    <property type="project" value="UniProtKB"/>
</dbReference>
<dbReference type="GO" id="GO:0043372">
    <property type="term" value="P:positive regulation of CD4-positive, alpha-beta T cell differentiation"/>
    <property type="evidence" value="ECO:0000250"/>
    <property type="project" value="UniProtKB"/>
</dbReference>
<dbReference type="GO" id="GO:0120162">
    <property type="term" value="P:positive regulation of cold-induced thermogenesis"/>
    <property type="evidence" value="ECO:0000250"/>
    <property type="project" value="YuBioLab"/>
</dbReference>
<dbReference type="GO" id="GO:0010628">
    <property type="term" value="P:positive regulation of gene expression"/>
    <property type="evidence" value="ECO:0000250"/>
    <property type="project" value="UniProtKB"/>
</dbReference>
<dbReference type="GO" id="GO:0046628">
    <property type="term" value="P:positive regulation of insulin receptor signaling pathway"/>
    <property type="evidence" value="ECO:0000250"/>
    <property type="project" value="UniProtKB"/>
</dbReference>
<dbReference type="GO" id="GO:0032740">
    <property type="term" value="P:positive regulation of interleukin-17 production"/>
    <property type="evidence" value="ECO:0000250"/>
    <property type="project" value="UniProtKB"/>
</dbReference>
<dbReference type="GO" id="GO:2000640">
    <property type="term" value="P:positive regulation of SREBP signaling pathway"/>
    <property type="evidence" value="ECO:0000250"/>
    <property type="project" value="UniProtKB"/>
</dbReference>
<dbReference type="GO" id="GO:0006357">
    <property type="term" value="P:regulation of transcription by RNA polymerase II"/>
    <property type="evidence" value="ECO:0000318"/>
    <property type="project" value="GO_Central"/>
</dbReference>
<dbReference type="GO" id="GO:0032868">
    <property type="term" value="P:response to insulin"/>
    <property type="evidence" value="ECO:0000250"/>
    <property type="project" value="UniProtKB"/>
</dbReference>
<dbReference type="GO" id="GO:0006366">
    <property type="term" value="P:transcription by RNA polymerase II"/>
    <property type="evidence" value="ECO:0000304"/>
    <property type="project" value="ProtInc"/>
</dbReference>
<dbReference type="CDD" id="cd18327">
    <property type="entry name" value="BTB_POZ_ZBTB7B_ZBTB15"/>
    <property type="match status" value="1"/>
</dbReference>
<dbReference type="FunFam" id="3.30.160.60:FF:000115">
    <property type="entry name" value="Zinc finger and BTB domain containing 7C"/>
    <property type="match status" value="1"/>
</dbReference>
<dbReference type="FunFam" id="3.30.160.60:FF:000572">
    <property type="entry name" value="Zinc finger and BTB domain containing 7C"/>
    <property type="match status" value="1"/>
</dbReference>
<dbReference type="FunFam" id="3.30.160.60:FF:000673">
    <property type="entry name" value="Zinc finger and BTB domain-containing 7B"/>
    <property type="match status" value="1"/>
</dbReference>
<dbReference type="FunFam" id="3.30.710.10:FF:000089">
    <property type="entry name" value="Zinc finger and BTB domain-containing protein 7B"/>
    <property type="match status" value="1"/>
</dbReference>
<dbReference type="FunFam" id="3.30.160.60:FF:000202">
    <property type="entry name" value="Zinc finger protein 574"/>
    <property type="match status" value="1"/>
</dbReference>
<dbReference type="Gene3D" id="3.30.160.60">
    <property type="entry name" value="Classic Zinc Finger"/>
    <property type="match status" value="4"/>
</dbReference>
<dbReference type="Gene3D" id="3.30.710.10">
    <property type="entry name" value="Potassium Channel Kv1.1, Chain A"/>
    <property type="match status" value="1"/>
</dbReference>
<dbReference type="InterPro" id="IPR000210">
    <property type="entry name" value="BTB/POZ_dom"/>
</dbReference>
<dbReference type="InterPro" id="IPR011333">
    <property type="entry name" value="SKP1/BTB/POZ_sf"/>
</dbReference>
<dbReference type="InterPro" id="IPR036236">
    <property type="entry name" value="Znf_C2H2_sf"/>
</dbReference>
<dbReference type="InterPro" id="IPR013087">
    <property type="entry name" value="Znf_C2H2_type"/>
</dbReference>
<dbReference type="InterPro" id="IPR050457">
    <property type="entry name" value="ZnFinger_BTB_dom_contain"/>
</dbReference>
<dbReference type="PANTHER" id="PTHR46105">
    <property type="entry name" value="AGAP004733-PA"/>
    <property type="match status" value="1"/>
</dbReference>
<dbReference type="PANTHER" id="PTHR46105:SF4">
    <property type="entry name" value="ZINC FINGER AND BTB DOMAIN-CONTAINING PROTEIN 7B"/>
    <property type="match status" value="1"/>
</dbReference>
<dbReference type="Pfam" id="PF00651">
    <property type="entry name" value="BTB"/>
    <property type="match status" value="1"/>
</dbReference>
<dbReference type="Pfam" id="PF00096">
    <property type="entry name" value="zf-C2H2"/>
    <property type="match status" value="2"/>
</dbReference>
<dbReference type="SMART" id="SM00225">
    <property type="entry name" value="BTB"/>
    <property type="match status" value="1"/>
</dbReference>
<dbReference type="SMART" id="SM00355">
    <property type="entry name" value="ZnF_C2H2"/>
    <property type="match status" value="4"/>
</dbReference>
<dbReference type="SUPFAM" id="SSF57667">
    <property type="entry name" value="beta-beta-alpha zinc fingers"/>
    <property type="match status" value="2"/>
</dbReference>
<dbReference type="SUPFAM" id="SSF54695">
    <property type="entry name" value="POZ domain"/>
    <property type="match status" value="1"/>
</dbReference>
<dbReference type="PROSITE" id="PS50097">
    <property type="entry name" value="BTB"/>
    <property type="match status" value="1"/>
</dbReference>
<dbReference type="PROSITE" id="PS00028">
    <property type="entry name" value="ZINC_FINGER_C2H2_1"/>
    <property type="match status" value="3"/>
</dbReference>
<dbReference type="PROSITE" id="PS50157">
    <property type="entry name" value="ZINC_FINGER_C2H2_2"/>
    <property type="match status" value="4"/>
</dbReference>
<gene>
    <name evidence="9" type="primary">ZBTB7B</name>
    <name type="synonym">ZBTB15</name>
    <name type="synonym">ZFP67</name>
    <name type="synonym">ZNF857B</name>
</gene>